<evidence type="ECO:0000255" key="1">
    <source>
        <dbReference type="HAMAP-Rule" id="MF_02105"/>
    </source>
</evidence>
<feature type="chain" id="PRO_0000384049" description="Lactate utilization protein A">
    <location>
        <begin position="1"/>
        <end position="238"/>
    </location>
</feature>
<sequence length="238" mass="26520">MKVSLFATCLIDLFYTNAGKATVELLERLGCEIDFPEAQTCCGQPAYNSGYVKEAKEAMKHMIRTFEHADYVVTPSGSCATMLKEYPRVFQGDREWESKAKALADKTYELTQFIVDVLKMEDVGAKLQGRATYHTSCHMTRLLGVKEAPFKLLKNVKGLELVPLPNAYQCCGFGGTFSVKMGTISEQMVDEKIEHIEEVNADYLIGADCGCLMNIGGRLKRQGKPIKVMHIAEVLNSR</sequence>
<name>LUTA_GEOSW</name>
<organism>
    <name type="scientific">Geobacillus sp. (strain WCH70)</name>
    <dbReference type="NCBI Taxonomy" id="471223"/>
    <lineage>
        <taxon>Bacteria</taxon>
        <taxon>Bacillati</taxon>
        <taxon>Bacillota</taxon>
        <taxon>Bacilli</taxon>
        <taxon>Bacillales</taxon>
        <taxon>Anoxybacillaceae</taxon>
        <taxon>Geobacillus</taxon>
    </lineage>
</organism>
<dbReference type="EMBL" id="CP001638">
    <property type="protein sequence ID" value="ACS23313.1"/>
    <property type="molecule type" value="Genomic_DNA"/>
</dbReference>
<dbReference type="SMR" id="C5D587"/>
<dbReference type="STRING" id="471223.GWCH70_0392"/>
<dbReference type="KEGG" id="gwc:GWCH70_0392"/>
<dbReference type="eggNOG" id="COG0247">
    <property type="taxonomic scope" value="Bacteria"/>
</dbReference>
<dbReference type="HOGENOM" id="CLU_023081_1_0_9"/>
<dbReference type="OrthoDB" id="9770306at2"/>
<dbReference type="GO" id="GO:0005829">
    <property type="term" value="C:cytosol"/>
    <property type="evidence" value="ECO:0007669"/>
    <property type="project" value="TreeGrafter"/>
</dbReference>
<dbReference type="GO" id="GO:0016491">
    <property type="term" value="F:oxidoreductase activity"/>
    <property type="evidence" value="ECO:0007669"/>
    <property type="project" value="UniProtKB-ARBA"/>
</dbReference>
<dbReference type="GO" id="GO:0006089">
    <property type="term" value="P:lactate metabolic process"/>
    <property type="evidence" value="ECO:0007669"/>
    <property type="project" value="UniProtKB-UniRule"/>
</dbReference>
<dbReference type="HAMAP" id="MF_02105">
    <property type="entry name" value="LutA"/>
    <property type="match status" value="1"/>
</dbReference>
<dbReference type="InterPro" id="IPR004017">
    <property type="entry name" value="Cys_rich_dom"/>
</dbReference>
<dbReference type="InterPro" id="IPR022822">
    <property type="entry name" value="LutA"/>
</dbReference>
<dbReference type="PANTHER" id="PTHR30296:SF0">
    <property type="entry name" value="LACTATE UTILIZATION PROTEIN A"/>
    <property type="match status" value="1"/>
</dbReference>
<dbReference type="PANTHER" id="PTHR30296">
    <property type="entry name" value="UNCHARACTERIZED PROTEIN YKGE"/>
    <property type="match status" value="1"/>
</dbReference>
<dbReference type="Pfam" id="PF02754">
    <property type="entry name" value="CCG"/>
    <property type="match status" value="2"/>
</dbReference>
<proteinExistence type="inferred from homology"/>
<reference key="1">
    <citation type="submission" date="2009-06" db="EMBL/GenBank/DDBJ databases">
        <title>Complete sequence of chromosome of Geopacillus sp. WCH70.</title>
        <authorList>
            <consortium name="US DOE Joint Genome Institute"/>
            <person name="Lucas S."/>
            <person name="Copeland A."/>
            <person name="Lapidus A."/>
            <person name="Glavina del Rio T."/>
            <person name="Dalin E."/>
            <person name="Tice H."/>
            <person name="Bruce D."/>
            <person name="Goodwin L."/>
            <person name="Pitluck S."/>
            <person name="Chertkov O."/>
            <person name="Brettin T."/>
            <person name="Detter J.C."/>
            <person name="Han C."/>
            <person name="Larimer F."/>
            <person name="Land M."/>
            <person name="Hauser L."/>
            <person name="Kyrpides N."/>
            <person name="Mikhailova N."/>
            <person name="Brumm P."/>
            <person name="Mead D.A."/>
            <person name="Richardson P."/>
        </authorList>
    </citation>
    <scope>NUCLEOTIDE SEQUENCE [LARGE SCALE GENOMIC DNA]</scope>
    <source>
        <strain>WCH70</strain>
    </source>
</reference>
<protein>
    <recommendedName>
        <fullName evidence="1">Lactate utilization protein A</fullName>
    </recommendedName>
</protein>
<comment type="function">
    <text evidence="1">Is involved in L-lactate degradation and allows cells to grow with lactate as the sole carbon source.</text>
</comment>
<comment type="similarity">
    <text evidence="1">Belongs to the LutA/YkgE family.</text>
</comment>
<gene>
    <name evidence="1" type="primary">lutA</name>
    <name type="ordered locus">GWCH70_0392</name>
</gene>
<accession>C5D587</accession>